<name>RHAM_YERPG</name>
<protein>
    <recommendedName>
        <fullName evidence="1">L-rhamnose mutarotase</fullName>
        <ecNumber evidence="1">5.1.3.32</ecNumber>
    </recommendedName>
    <alternativeName>
        <fullName evidence="1">Rhamnose 1-epimerase</fullName>
    </alternativeName>
    <alternativeName>
        <fullName evidence="1">Type-3 mutarotase</fullName>
    </alternativeName>
</protein>
<sequence length="104" mass="12198">MIRKAFVMAVNPDAHAEYQRRHTPIWPELESVLKAHGAHHYSIFLDETRNLLFGVVEIESEERWNAVAQTAECQRWWQHMADVMPSHPDNSPVSQALREVFYLE</sequence>
<dbReference type="EC" id="5.1.3.32" evidence="1"/>
<dbReference type="EMBL" id="CP000901">
    <property type="protein sequence ID" value="ABX87050.1"/>
    <property type="molecule type" value="Genomic_DNA"/>
</dbReference>
<dbReference type="RefSeq" id="WP_002209101.1">
    <property type="nucleotide sequence ID" value="NZ_CP009935.1"/>
</dbReference>
<dbReference type="SMR" id="A9QYS5"/>
<dbReference type="GeneID" id="57974279"/>
<dbReference type="KEGG" id="ypg:YpAngola_A0748"/>
<dbReference type="PATRIC" id="fig|349746.12.peg.1695"/>
<dbReference type="UniPathway" id="UPA00125"/>
<dbReference type="GO" id="GO:0005737">
    <property type="term" value="C:cytoplasm"/>
    <property type="evidence" value="ECO:0007669"/>
    <property type="project" value="UniProtKB-SubCell"/>
</dbReference>
<dbReference type="GO" id="GO:0062192">
    <property type="term" value="F:L-rhamnose mutarotase activity"/>
    <property type="evidence" value="ECO:0007669"/>
    <property type="project" value="UniProtKB-EC"/>
</dbReference>
<dbReference type="GO" id="GO:0019301">
    <property type="term" value="P:rhamnose catabolic process"/>
    <property type="evidence" value="ECO:0007669"/>
    <property type="project" value="TreeGrafter"/>
</dbReference>
<dbReference type="Gene3D" id="3.30.70.100">
    <property type="match status" value="1"/>
</dbReference>
<dbReference type="HAMAP" id="MF_01663">
    <property type="entry name" value="L_rham_rotase"/>
    <property type="match status" value="1"/>
</dbReference>
<dbReference type="InterPro" id="IPR011008">
    <property type="entry name" value="Dimeric_a/b-barrel"/>
</dbReference>
<dbReference type="InterPro" id="IPR013448">
    <property type="entry name" value="L-rhamnose_mutarotase"/>
</dbReference>
<dbReference type="InterPro" id="IPR008000">
    <property type="entry name" value="Rham/fucose_mutarotase"/>
</dbReference>
<dbReference type="NCBIfam" id="TIGR02625">
    <property type="entry name" value="YiiL_rotase"/>
    <property type="match status" value="1"/>
</dbReference>
<dbReference type="PANTHER" id="PTHR34389">
    <property type="entry name" value="L-RHAMNOSE MUTAROTASE"/>
    <property type="match status" value="1"/>
</dbReference>
<dbReference type="PANTHER" id="PTHR34389:SF2">
    <property type="entry name" value="L-RHAMNOSE MUTAROTASE"/>
    <property type="match status" value="1"/>
</dbReference>
<dbReference type="Pfam" id="PF05336">
    <property type="entry name" value="rhaM"/>
    <property type="match status" value="1"/>
</dbReference>
<dbReference type="SUPFAM" id="SSF54909">
    <property type="entry name" value="Dimeric alpha+beta barrel"/>
    <property type="match status" value="1"/>
</dbReference>
<feature type="chain" id="PRO_0000344613" description="L-rhamnose mutarotase">
    <location>
        <begin position="1"/>
        <end position="104"/>
    </location>
</feature>
<feature type="active site" description="Proton donor" evidence="1">
    <location>
        <position position="22"/>
    </location>
</feature>
<feature type="binding site" evidence="1">
    <location>
        <position position="18"/>
    </location>
    <ligand>
        <name>substrate</name>
    </ligand>
</feature>
<feature type="binding site" evidence="1">
    <location>
        <position position="41"/>
    </location>
    <ligand>
        <name>substrate</name>
    </ligand>
</feature>
<feature type="binding site" evidence="1">
    <location>
        <begin position="76"/>
        <end position="77"/>
    </location>
    <ligand>
        <name>substrate</name>
    </ligand>
</feature>
<accession>A9QYS5</accession>
<keyword id="KW-0119">Carbohydrate metabolism</keyword>
<keyword id="KW-0963">Cytoplasm</keyword>
<keyword id="KW-0413">Isomerase</keyword>
<keyword id="KW-0684">Rhamnose metabolism</keyword>
<organism>
    <name type="scientific">Yersinia pestis bv. Antiqua (strain Angola)</name>
    <dbReference type="NCBI Taxonomy" id="349746"/>
    <lineage>
        <taxon>Bacteria</taxon>
        <taxon>Pseudomonadati</taxon>
        <taxon>Pseudomonadota</taxon>
        <taxon>Gammaproteobacteria</taxon>
        <taxon>Enterobacterales</taxon>
        <taxon>Yersiniaceae</taxon>
        <taxon>Yersinia</taxon>
    </lineage>
</organism>
<proteinExistence type="inferred from homology"/>
<gene>
    <name evidence="1" type="primary">rhaM</name>
    <name type="ordered locus">YpAngola_A0748</name>
</gene>
<reference key="1">
    <citation type="journal article" date="2010" name="J. Bacteriol.">
        <title>Genome sequence of the deep-rooted Yersinia pestis strain Angola reveals new insights into the evolution and pangenome of the plague bacterium.</title>
        <authorList>
            <person name="Eppinger M."/>
            <person name="Worsham P.L."/>
            <person name="Nikolich M.P."/>
            <person name="Riley D.R."/>
            <person name="Sebastian Y."/>
            <person name="Mou S."/>
            <person name="Achtman M."/>
            <person name="Lindler L.E."/>
            <person name="Ravel J."/>
        </authorList>
    </citation>
    <scope>NUCLEOTIDE SEQUENCE [LARGE SCALE GENOMIC DNA]</scope>
    <source>
        <strain>Angola</strain>
    </source>
</reference>
<comment type="function">
    <text evidence="1">Involved in the anomeric conversion of L-rhamnose.</text>
</comment>
<comment type="catalytic activity">
    <reaction evidence="1">
        <text>alpha-L-rhamnose = beta-L-rhamnose</text>
        <dbReference type="Rhea" id="RHEA:25584"/>
        <dbReference type="ChEBI" id="CHEBI:27586"/>
        <dbReference type="ChEBI" id="CHEBI:27907"/>
        <dbReference type="EC" id="5.1.3.32"/>
    </reaction>
</comment>
<comment type="pathway">
    <text evidence="1">Carbohydrate metabolism; L-rhamnose metabolism.</text>
</comment>
<comment type="subunit">
    <text evidence="1">Homodimer.</text>
</comment>
<comment type="subcellular location">
    <subcellularLocation>
        <location evidence="1">Cytoplasm</location>
    </subcellularLocation>
</comment>
<comment type="similarity">
    <text evidence="1">Belongs to the rhamnose mutarotase family.</text>
</comment>
<evidence type="ECO:0000255" key="1">
    <source>
        <dbReference type="HAMAP-Rule" id="MF_01663"/>
    </source>
</evidence>